<sequence length="469" mass="50722">MAQTLYDKLWNTHVVHTEDDGTALLYIDRQLLHEVTSPQAFEGLNVAHRPVWRISANLAVSDHNVPTTDRSHGIADPVSKLQVDTLDANCDAFGITQFKMNDVRQGIVHIIGPEQGATLPGMTIVCGDSHTSTHGAFGALAHGIGTSEVEHVLATQTLLQKKSKNMLVKVEGALPRGCTAKDIVLAIIGRIGTAGGTGYAIEFGGSTIRALTMEGRMTVCNMAIEAGARAGMVAVDDTTIDYLKGRPFVPTGAEWDQAVEYWREFKSDEGAQFDRVVELNAAEIVPQVTWGTSPEMVTSIDGRVPDPEREKDPVKRDAMERALAYMALEPNTPMESIKVDKIFIGSCTNARIEDIRAAAYVVKKLNRRIASNVRLAMVVPGSGLVKAQAEREGLDKVFTDAGFEWREPGCSMCLAMNADRLDPGERCASTSNRNFEGRQGAGGRTHLVSPAMAAAAAIEGHFVDIRQLG</sequence>
<accession>Q0BAC8</accession>
<evidence type="ECO:0000255" key="1">
    <source>
        <dbReference type="HAMAP-Rule" id="MF_01026"/>
    </source>
</evidence>
<organism>
    <name type="scientific">Burkholderia ambifaria (strain ATCC BAA-244 / DSM 16087 / CCUG 44356 / LMG 19182 / AMMD)</name>
    <name type="common">Burkholderia cepacia (strain AMMD)</name>
    <dbReference type="NCBI Taxonomy" id="339670"/>
    <lineage>
        <taxon>Bacteria</taxon>
        <taxon>Pseudomonadati</taxon>
        <taxon>Pseudomonadota</taxon>
        <taxon>Betaproteobacteria</taxon>
        <taxon>Burkholderiales</taxon>
        <taxon>Burkholderiaceae</taxon>
        <taxon>Burkholderia</taxon>
        <taxon>Burkholderia cepacia complex</taxon>
    </lineage>
</organism>
<keyword id="KW-0004">4Fe-4S</keyword>
<keyword id="KW-0028">Amino-acid biosynthesis</keyword>
<keyword id="KW-0100">Branched-chain amino acid biosynthesis</keyword>
<keyword id="KW-0408">Iron</keyword>
<keyword id="KW-0411">Iron-sulfur</keyword>
<keyword id="KW-0432">Leucine biosynthesis</keyword>
<keyword id="KW-0456">Lyase</keyword>
<keyword id="KW-0479">Metal-binding</keyword>
<name>LEUC_BURCM</name>
<feature type="chain" id="PRO_1000063535" description="3-isopropylmalate dehydratase large subunit">
    <location>
        <begin position="1"/>
        <end position="469"/>
    </location>
</feature>
<feature type="binding site" evidence="1">
    <location>
        <position position="347"/>
    </location>
    <ligand>
        <name>[4Fe-4S] cluster</name>
        <dbReference type="ChEBI" id="CHEBI:49883"/>
    </ligand>
</feature>
<feature type="binding site" evidence="1">
    <location>
        <position position="410"/>
    </location>
    <ligand>
        <name>[4Fe-4S] cluster</name>
        <dbReference type="ChEBI" id="CHEBI:49883"/>
    </ligand>
</feature>
<feature type="binding site" evidence="1">
    <location>
        <position position="413"/>
    </location>
    <ligand>
        <name>[4Fe-4S] cluster</name>
        <dbReference type="ChEBI" id="CHEBI:49883"/>
    </ligand>
</feature>
<comment type="function">
    <text evidence="1">Catalyzes the isomerization between 2-isopropylmalate and 3-isopropylmalate, via the formation of 2-isopropylmaleate.</text>
</comment>
<comment type="catalytic activity">
    <reaction evidence="1">
        <text>(2R,3S)-3-isopropylmalate = (2S)-2-isopropylmalate</text>
        <dbReference type="Rhea" id="RHEA:32287"/>
        <dbReference type="ChEBI" id="CHEBI:1178"/>
        <dbReference type="ChEBI" id="CHEBI:35121"/>
        <dbReference type="EC" id="4.2.1.33"/>
    </reaction>
</comment>
<comment type="cofactor">
    <cofactor evidence="1">
        <name>[4Fe-4S] cluster</name>
        <dbReference type="ChEBI" id="CHEBI:49883"/>
    </cofactor>
    <text evidence="1">Binds 1 [4Fe-4S] cluster per subunit.</text>
</comment>
<comment type="pathway">
    <text evidence="1">Amino-acid biosynthesis; L-leucine biosynthesis; L-leucine from 3-methyl-2-oxobutanoate: step 2/4.</text>
</comment>
<comment type="subunit">
    <text evidence="1">Heterodimer of LeuC and LeuD.</text>
</comment>
<comment type="similarity">
    <text evidence="1">Belongs to the aconitase/IPM isomerase family. LeuC type 1 subfamily.</text>
</comment>
<dbReference type="EC" id="4.2.1.33" evidence="1"/>
<dbReference type="EMBL" id="CP000441">
    <property type="protein sequence ID" value="ABI88895.1"/>
    <property type="molecule type" value="Genomic_DNA"/>
</dbReference>
<dbReference type="RefSeq" id="WP_011658378.1">
    <property type="nucleotide sequence ID" value="NZ_CP009799.1"/>
</dbReference>
<dbReference type="SMR" id="Q0BAC8"/>
<dbReference type="GeneID" id="93086348"/>
<dbReference type="KEGG" id="bam:Bamb_3340"/>
<dbReference type="PATRIC" id="fig|339670.21.peg.3548"/>
<dbReference type="eggNOG" id="COG0065">
    <property type="taxonomic scope" value="Bacteria"/>
</dbReference>
<dbReference type="UniPathway" id="UPA00048">
    <property type="reaction ID" value="UER00071"/>
</dbReference>
<dbReference type="Proteomes" id="UP000000662">
    <property type="component" value="Chromosome 2"/>
</dbReference>
<dbReference type="GO" id="GO:0003861">
    <property type="term" value="F:3-isopropylmalate dehydratase activity"/>
    <property type="evidence" value="ECO:0007669"/>
    <property type="project" value="UniProtKB-UniRule"/>
</dbReference>
<dbReference type="GO" id="GO:0051539">
    <property type="term" value="F:4 iron, 4 sulfur cluster binding"/>
    <property type="evidence" value="ECO:0007669"/>
    <property type="project" value="UniProtKB-KW"/>
</dbReference>
<dbReference type="GO" id="GO:0046872">
    <property type="term" value="F:metal ion binding"/>
    <property type="evidence" value="ECO:0007669"/>
    <property type="project" value="UniProtKB-KW"/>
</dbReference>
<dbReference type="GO" id="GO:0009098">
    <property type="term" value="P:L-leucine biosynthetic process"/>
    <property type="evidence" value="ECO:0007669"/>
    <property type="project" value="UniProtKB-UniRule"/>
</dbReference>
<dbReference type="CDD" id="cd01583">
    <property type="entry name" value="IPMI"/>
    <property type="match status" value="1"/>
</dbReference>
<dbReference type="FunFam" id="3.30.499.10:FF:000007">
    <property type="entry name" value="3-isopropylmalate dehydratase large subunit"/>
    <property type="match status" value="1"/>
</dbReference>
<dbReference type="Gene3D" id="3.30.499.10">
    <property type="entry name" value="Aconitase, domain 3"/>
    <property type="match status" value="2"/>
</dbReference>
<dbReference type="HAMAP" id="MF_01026">
    <property type="entry name" value="LeuC_type1"/>
    <property type="match status" value="1"/>
</dbReference>
<dbReference type="InterPro" id="IPR004430">
    <property type="entry name" value="3-IsopropMal_deHydase_lsu"/>
</dbReference>
<dbReference type="InterPro" id="IPR015931">
    <property type="entry name" value="Acnase/IPM_dHydase_lsu_aba_1/3"/>
</dbReference>
<dbReference type="InterPro" id="IPR001030">
    <property type="entry name" value="Acoase/IPM_deHydtase_lsu_aba"/>
</dbReference>
<dbReference type="InterPro" id="IPR018136">
    <property type="entry name" value="Aconitase_4Fe-4S_BS"/>
</dbReference>
<dbReference type="InterPro" id="IPR036008">
    <property type="entry name" value="Aconitase_4Fe-4S_dom"/>
</dbReference>
<dbReference type="InterPro" id="IPR050067">
    <property type="entry name" value="IPM_dehydratase_rel_enz"/>
</dbReference>
<dbReference type="InterPro" id="IPR033941">
    <property type="entry name" value="IPMI_cat"/>
</dbReference>
<dbReference type="NCBIfam" id="TIGR00170">
    <property type="entry name" value="leuC"/>
    <property type="match status" value="1"/>
</dbReference>
<dbReference type="NCBIfam" id="NF004016">
    <property type="entry name" value="PRK05478.1"/>
    <property type="match status" value="1"/>
</dbReference>
<dbReference type="NCBIfam" id="NF009116">
    <property type="entry name" value="PRK12466.1"/>
    <property type="match status" value="1"/>
</dbReference>
<dbReference type="PANTHER" id="PTHR43822:SF9">
    <property type="entry name" value="3-ISOPROPYLMALATE DEHYDRATASE"/>
    <property type="match status" value="1"/>
</dbReference>
<dbReference type="PANTHER" id="PTHR43822">
    <property type="entry name" value="HOMOACONITASE, MITOCHONDRIAL-RELATED"/>
    <property type="match status" value="1"/>
</dbReference>
<dbReference type="Pfam" id="PF00330">
    <property type="entry name" value="Aconitase"/>
    <property type="match status" value="1"/>
</dbReference>
<dbReference type="PRINTS" id="PR00415">
    <property type="entry name" value="ACONITASE"/>
</dbReference>
<dbReference type="SUPFAM" id="SSF53732">
    <property type="entry name" value="Aconitase iron-sulfur domain"/>
    <property type="match status" value="1"/>
</dbReference>
<dbReference type="PROSITE" id="PS00450">
    <property type="entry name" value="ACONITASE_1"/>
    <property type="match status" value="1"/>
</dbReference>
<dbReference type="PROSITE" id="PS01244">
    <property type="entry name" value="ACONITASE_2"/>
    <property type="match status" value="1"/>
</dbReference>
<gene>
    <name evidence="1" type="primary">leuC</name>
    <name type="ordered locus">Bamb_3340</name>
</gene>
<protein>
    <recommendedName>
        <fullName evidence="1">3-isopropylmalate dehydratase large subunit</fullName>
        <ecNumber evidence="1">4.2.1.33</ecNumber>
    </recommendedName>
    <alternativeName>
        <fullName evidence="1">Alpha-IPM isomerase</fullName>
        <shortName evidence="1">IPMI</shortName>
    </alternativeName>
    <alternativeName>
        <fullName evidence="1">Isopropylmalate isomerase</fullName>
    </alternativeName>
</protein>
<proteinExistence type="inferred from homology"/>
<reference key="1">
    <citation type="submission" date="2006-08" db="EMBL/GenBank/DDBJ databases">
        <title>Complete sequence of chromosome 2 of Burkholderia cepacia AMMD.</title>
        <authorList>
            <person name="Copeland A."/>
            <person name="Lucas S."/>
            <person name="Lapidus A."/>
            <person name="Barry K."/>
            <person name="Detter J.C."/>
            <person name="Glavina del Rio T."/>
            <person name="Hammon N."/>
            <person name="Israni S."/>
            <person name="Pitluck S."/>
            <person name="Bruce D."/>
            <person name="Chain P."/>
            <person name="Malfatti S."/>
            <person name="Shin M."/>
            <person name="Vergez L."/>
            <person name="Schmutz J."/>
            <person name="Larimer F."/>
            <person name="Land M."/>
            <person name="Hauser L."/>
            <person name="Kyrpides N."/>
            <person name="Kim E."/>
            <person name="Parke J."/>
            <person name="Coenye T."/>
            <person name="Konstantinidis K."/>
            <person name="Ramette A."/>
            <person name="Tiedje J."/>
            <person name="Richardson P."/>
        </authorList>
    </citation>
    <scope>NUCLEOTIDE SEQUENCE [LARGE SCALE GENOMIC DNA]</scope>
    <source>
        <strain>ATCC BAA-244 / DSM 16087 / CCUG 44356 / LMG 19182 / AMMD</strain>
    </source>
</reference>